<comment type="similarity">
    <text evidence="1">Belongs to the UPF0102 family.</text>
</comment>
<protein>
    <recommendedName>
        <fullName evidence="1">UPF0102 protein PMT_0624</fullName>
    </recommendedName>
</protein>
<sequence>MMDSTGMGCWGEERVLRLLQKRGWQLVSQRWSCRYGELDLVVEKQQRVLVVEVKSRRSRGLDHWGLCAFNKGKQLRLMRAIGCWLATHPYFAEHSLELVMALVPLPPSQNTLDWIRIDDLDIDAAD</sequence>
<evidence type="ECO:0000255" key="1">
    <source>
        <dbReference type="HAMAP-Rule" id="MF_00048"/>
    </source>
</evidence>
<reference key="1">
    <citation type="journal article" date="2003" name="Nature">
        <title>Genome divergence in two Prochlorococcus ecotypes reflects oceanic niche differentiation.</title>
        <authorList>
            <person name="Rocap G."/>
            <person name="Larimer F.W."/>
            <person name="Lamerdin J.E."/>
            <person name="Malfatti S."/>
            <person name="Chain P."/>
            <person name="Ahlgren N.A."/>
            <person name="Arellano A."/>
            <person name="Coleman M."/>
            <person name="Hauser L."/>
            <person name="Hess W.R."/>
            <person name="Johnson Z.I."/>
            <person name="Land M.L."/>
            <person name="Lindell D."/>
            <person name="Post A.F."/>
            <person name="Regala W."/>
            <person name="Shah M."/>
            <person name="Shaw S.L."/>
            <person name="Steglich C."/>
            <person name="Sullivan M.B."/>
            <person name="Ting C.S."/>
            <person name="Tolonen A."/>
            <person name="Webb E.A."/>
            <person name="Zinser E.R."/>
            <person name="Chisholm S.W."/>
        </authorList>
    </citation>
    <scope>NUCLEOTIDE SEQUENCE [LARGE SCALE GENOMIC DNA]</scope>
    <source>
        <strain>MIT 9313</strain>
    </source>
</reference>
<gene>
    <name type="ordered locus">PMT_0624</name>
</gene>
<name>Y624_PROMM</name>
<organism>
    <name type="scientific">Prochlorococcus marinus (strain MIT 9313)</name>
    <dbReference type="NCBI Taxonomy" id="74547"/>
    <lineage>
        <taxon>Bacteria</taxon>
        <taxon>Bacillati</taxon>
        <taxon>Cyanobacteriota</taxon>
        <taxon>Cyanophyceae</taxon>
        <taxon>Synechococcales</taxon>
        <taxon>Prochlorococcaceae</taxon>
        <taxon>Prochlorococcus</taxon>
    </lineage>
</organism>
<dbReference type="EMBL" id="BX548175">
    <property type="protein sequence ID" value="CAE20799.1"/>
    <property type="molecule type" value="Genomic_DNA"/>
</dbReference>
<dbReference type="RefSeq" id="WP_011130003.1">
    <property type="nucleotide sequence ID" value="NC_005071.1"/>
</dbReference>
<dbReference type="SMR" id="Q7V7V8"/>
<dbReference type="KEGG" id="pmt:PMT_0624"/>
<dbReference type="eggNOG" id="COG0792">
    <property type="taxonomic scope" value="Bacteria"/>
</dbReference>
<dbReference type="HOGENOM" id="CLU_115353_0_3_3"/>
<dbReference type="OrthoDB" id="9802516at2"/>
<dbReference type="Proteomes" id="UP000001423">
    <property type="component" value="Chromosome"/>
</dbReference>
<dbReference type="GO" id="GO:0003676">
    <property type="term" value="F:nucleic acid binding"/>
    <property type="evidence" value="ECO:0007669"/>
    <property type="project" value="InterPro"/>
</dbReference>
<dbReference type="Gene3D" id="3.40.1350.10">
    <property type="match status" value="1"/>
</dbReference>
<dbReference type="HAMAP" id="MF_00048">
    <property type="entry name" value="UPF0102"/>
    <property type="match status" value="1"/>
</dbReference>
<dbReference type="InterPro" id="IPR011335">
    <property type="entry name" value="Restrct_endonuc-II-like"/>
</dbReference>
<dbReference type="InterPro" id="IPR011856">
    <property type="entry name" value="tRNA_endonuc-like_dom_sf"/>
</dbReference>
<dbReference type="InterPro" id="IPR003509">
    <property type="entry name" value="UPF0102_YraN-like"/>
</dbReference>
<dbReference type="NCBIfam" id="NF011281">
    <property type="entry name" value="PRK14689.1"/>
    <property type="match status" value="1"/>
</dbReference>
<dbReference type="PANTHER" id="PTHR34039">
    <property type="entry name" value="UPF0102 PROTEIN YRAN"/>
    <property type="match status" value="1"/>
</dbReference>
<dbReference type="PANTHER" id="PTHR34039:SF1">
    <property type="entry name" value="UPF0102 PROTEIN YRAN"/>
    <property type="match status" value="1"/>
</dbReference>
<dbReference type="Pfam" id="PF02021">
    <property type="entry name" value="UPF0102"/>
    <property type="match status" value="1"/>
</dbReference>
<dbReference type="SUPFAM" id="SSF52980">
    <property type="entry name" value="Restriction endonuclease-like"/>
    <property type="match status" value="1"/>
</dbReference>
<feature type="chain" id="PRO_1000009245" description="UPF0102 protein PMT_0624">
    <location>
        <begin position="1"/>
        <end position="126"/>
    </location>
</feature>
<proteinExistence type="inferred from homology"/>
<accession>Q7V7V8</accession>
<keyword id="KW-1185">Reference proteome</keyword>